<gene>
    <name evidence="1" type="primary">rps18</name>
</gene>
<proteinExistence type="inferred from homology"/>
<feature type="chain" id="PRO_0000111274" description="Small ribosomal subunit protein bS18c">
    <location>
        <begin position="1"/>
        <end position="101"/>
    </location>
</feature>
<feature type="region of interest" description="Disordered" evidence="2">
    <location>
        <begin position="1"/>
        <end position="24"/>
    </location>
</feature>
<feature type="compositionally biased region" description="Basic residues" evidence="2">
    <location>
        <begin position="1"/>
        <end position="19"/>
    </location>
</feature>
<name>RR18_AMBTC</name>
<accession>Q70XY4</accession>
<organism>
    <name type="scientific">Amborella trichopoda</name>
    <dbReference type="NCBI Taxonomy" id="13333"/>
    <lineage>
        <taxon>Eukaryota</taxon>
        <taxon>Viridiplantae</taxon>
        <taxon>Streptophyta</taxon>
        <taxon>Embryophyta</taxon>
        <taxon>Tracheophyta</taxon>
        <taxon>Spermatophyta</taxon>
        <taxon>Magnoliopsida</taxon>
        <taxon>Amborellales</taxon>
        <taxon>Amborellaceae</taxon>
        <taxon>Amborella</taxon>
    </lineage>
</organism>
<evidence type="ECO:0000255" key="1">
    <source>
        <dbReference type="HAMAP-Rule" id="MF_00270"/>
    </source>
</evidence>
<evidence type="ECO:0000256" key="2">
    <source>
        <dbReference type="SAM" id="MobiDB-lite"/>
    </source>
</evidence>
<evidence type="ECO:0000305" key="3"/>
<comment type="subunit">
    <text>Part of the 30S ribosomal subunit.</text>
</comment>
<comment type="subcellular location">
    <subcellularLocation>
        <location>Plastid</location>
        <location>Chloroplast</location>
    </subcellularLocation>
</comment>
<comment type="similarity">
    <text evidence="1">Belongs to the bacterial ribosomal protein bS18 family.</text>
</comment>
<protein>
    <recommendedName>
        <fullName evidence="1">Small ribosomal subunit protein bS18c</fullName>
    </recommendedName>
    <alternativeName>
        <fullName evidence="3">30S ribosomal protein S18, chloroplastic</fullName>
    </alternativeName>
</protein>
<reference key="1">
    <citation type="journal article" date="2003" name="Mol. Biol. Evol.">
        <title>Analysis of the Amborella trichopoda chloroplast genome sequence suggests that Amborella is not a basal angiosperm.</title>
        <authorList>
            <person name="Goremykin V.V."/>
            <person name="Hirsch-Ernst K.I."/>
            <person name="Wolfl S."/>
            <person name="Hellwig F.H."/>
        </authorList>
    </citation>
    <scope>NUCLEOTIDE SEQUENCE [LARGE SCALE GENOMIC DNA]</scope>
</reference>
<sequence length="101" mass="11923">MDKSKQPFRKSKRSFRRRLPPIGSGDRIDYRNMSLIGRFISEQGKILSRRVNRLTLKQQRLITIAIKQARILSPLPFLNNEKQFERTESLPRITGTRTIKK</sequence>
<geneLocation type="chloroplast"/>
<keyword id="KW-0150">Chloroplast</keyword>
<keyword id="KW-0934">Plastid</keyword>
<keyword id="KW-1185">Reference proteome</keyword>
<keyword id="KW-0687">Ribonucleoprotein</keyword>
<keyword id="KW-0689">Ribosomal protein</keyword>
<keyword id="KW-0694">RNA-binding</keyword>
<keyword id="KW-0699">rRNA-binding</keyword>
<dbReference type="EMBL" id="AJ506156">
    <property type="protein sequence ID" value="CAD45128.1"/>
    <property type="molecule type" value="Genomic_DNA"/>
</dbReference>
<dbReference type="RefSeq" id="NP_904121.1">
    <property type="nucleotide sequence ID" value="NC_005086.1"/>
</dbReference>
<dbReference type="SMR" id="Q70XY4"/>
<dbReference type="STRING" id="13333.Q70XY4"/>
<dbReference type="GeneID" id="2546564"/>
<dbReference type="KEGG" id="atr:2546564"/>
<dbReference type="OrthoDB" id="21463at2759"/>
<dbReference type="Proteomes" id="UP000017836">
    <property type="component" value="Chloroplast"/>
</dbReference>
<dbReference type="GO" id="GO:0009507">
    <property type="term" value="C:chloroplast"/>
    <property type="evidence" value="ECO:0007669"/>
    <property type="project" value="UniProtKB-SubCell"/>
</dbReference>
<dbReference type="GO" id="GO:0005763">
    <property type="term" value="C:mitochondrial small ribosomal subunit"/>
    <property type="evidence" value="ECO:0000318"/>
    <property type="project" value="GO_Central"/>
</dbReference>
<dbReference type="GO" id="GO:0070181">
    <property type="term" value="F:small ribosomal subunit rRNA binding"/>
    <property type="evidence" value="ECO:0000318"/>
    <property type="project" value="GO_Central"/>
</dbReference>
<dbReference type="GO" id="GO:0003735">
    <property type="term" value="F:structural constituent of ribosome"/>
    <property type="evidence" value="ECO:0000318"/>
    <property type="project" value="GO_Central"/>
</dbReference>
<dbReference type="GO" id="GO:0006412">
    <property type="term" value="P:translation"/>
    <property type="evidence" value="ECO:0000318"/>
    <property type="project" value="GO_Central"/>
</dbReference>
<dbReference type="FunFam" id="4.10.640.10:FF:000002">
    <property type="entry name" value="30S ribosomal protein S18, chloroplastic"/>
    <property type="match status" value="1"/>
</dbReference>
<dbReference type="Gene3D" id="4.10.640.10">
    <property type="entry name" value="Ribosomal protein S18"/>
    <property type="match status" value="1"/>
</dbReference>
<dbReference type="HAMAP" id="MF_00270">
    <property type="entry name" value="Ribosomal_bS18"/>
    <property type="match status" value="1"/>
</dbReference>
<dbReference type="InterPro" id="IPR001648">
    <property type="entry name" value="Ribosomal_bS18"/>
</dbReference>
<dbReference type="InterPro" id="IPR018275">
    <property type="entry name" value="Ribosomal_bS18_CS"/>
</dbReference>
<dbReference type="InterPro" id="IPR036870">
    <property type="entry name" value="Ribosomal_bS18_sf"/>
</dbReference>
<dbReference type="NCBIfam" id="TIGR00165">
    <property type="entry name" value="S18"/>
    <property type="match status" value="1"/>
</dbReference>
<dbReference type="PANTHER" id="PTHR13479">
    <property type="entry name" value="30S RIBOSOMAL PROTEIN S18"/>
    <property type="match status" value="1"/>
</dbReference>
<dbReference type="PANTHER" id="PTHR13479:SF40">
    <property type="entry name" value="SMALL RIBOSOMAL SUBUNIT PROTEIN BS18M"/>
    <property type="match status" value="1"/>
</dbReference>
<dbReference type="Pfam" id="PF01084">
    <property type="entry name" value="Ribosomal_S18"/>
    <property type="match status" value="1"/>
</dbReference>
<dbReference type="PRINTS" id="PR00974">
    <property type="entry name" value="RIBOSOMALS18"/>
</dbReference>
<dbReference type="SUPFAM" id="SSF46911">
    <property type="entry name" value="Ribosomal protein S18"/>
    <property type="match status" value="1"/>
</dbReference>
<dbReference type="PROSITE" id="PS00057">
    <property type="entry name" value="RIBOSOMAL_S18"/>
    <property type="match status" value="1"/>
</dbReference>